<accession>A0A0R0HW51</accession>
<accession>Q96428</accession>
<reference key="1">
    <citation type="journal article" date="2010" name="Nature">
        <title>Genome sequence of the palaeopolyploid soybean.</title>
        <authorList>
            <person name="Schmutz J."/>
            <person name="Cannon S.B."/>
            <person name="Schlueter J."/>
            <person name="Ma J."/>
            <person name="Mitros T."/>
            <person name="Nelson W."/>
            <person name="Hyten D.L."/>
            <person name="Song Q."/>
            <person name="Thelen J.J."/>
            <person name="Cheng J."/>
            <person name="Xu D."/>
            <person name="Hellsten U."/>
            <person name="May G.D."/>
            <person name="Yu Y."/>
            <person name="Sakurai T."/>
            <person name="Umezawa T."/>
            <person name="Bhattacharyya M.K."/>
            <person name="Sandhu D."/>
            <person name="Valliyodan B."/>
            <person name="Lindquist E."/>
            <person name="Peto M."/>
            <person name="Grant D."/>
            <person name="Shu S."/>
            <person name="Goodstein D."/>
            <person name="Barry K."/>
            <person name="Futrell-Griggs M."/>
            <person name="Abernathy B."/>
            <person name="Du J."/>
            <person name="Tian Z."/>
            <person name="Zhu L."/>
            <person name="Gill N."/>
            <person name="Joshi T."/>
            <person name="Libault M."/>
            <person name="Sethuraman A."/>
            <person name="Zhang X.-C."/>
            <person name="Shinozaki K."/>
            <person name="Nguyen H.T."/>
            <person name="Wing R.A."/>
            <person name="Cregan P."/>
            <person name="Specht J."/>
            <person name="Grimwood J."/>
            <person name="Rokhsar D."/>
            <person name="Stacey G."/>
            <person name="Shoemaker R.C."/>
            <person name="Jackson S.A."/>
        </authorList>
    </citation>
    <scope>NUCLEOTIDE SEQUENCE [LARGE SCALE GENOMIC DNA]</scope>
    <source>
        <strain>cv. Williams 82</strain>
        <tissue>Callus</tissue>
    </source>
</reference>
<reference key="2">
    <citation type="journal article" date="1982" name="Proc. Natl. Acad. Sci. U.S.A.">
        <title>Soybean leghemoglobin gene family: normal, pseudo, and truncated genes.</title>
        <authorList>
            <person name="Brisson N."/>
            <person name="Verma D.P.S."/>
        </authorList>
    </citation>
    <scope>NUCLEOTIDE SEQUENCE [GENOMIC DNA] OF 87-168</scope>
    <source>
        <tissue>Root nodule</tissue>
    </source>
</reference>
<reference key="3">
    <citation type="journal article" date="2020" name="Ann. Bot.">
        <title>Excess nitrate induces nodule greening and reduces transcript and protein expression levels of soybean leghaemoglobins.</title>
        <authorList>
            <person name="Du M."/>
            <person name="Gao Z."/>
            <person name="Li X."/>
            <person name="Liao H."/>
        </authorList>
    </citation>
    <scope>FUNCTION</scope>
    <scope>TISSUE SPECIFICITY</scope>
    <scope>GENE FAMILY</scope>
    <scope>NOMENCLATURE</scope>
    <source>
        <strain>cv. HN66</strain>
    </source>
</reference>
<reference key="4">
    <citation type="journal article" date="2022" name="Gene">
        <title>Uncovering the roles of hemoglobins in soybean facing water stress.</title>
        <authorList>
            <person name="Koltun A."/>
            <person name="Fuhrmann-Aoyagi M.B."/>
            <person name="Cardoso Moraes L.A."/>
            <person name="Lima Nepomuceno A."/>
            <person name="Simoes Azeredo Goncalves L."/>
            <person name="Mertz-Henning L.M."/>
        </authorList>
    </citation>
    <scope>FUNCTION</scope>
    <scope>DOWN-REGULATION BY WATERLOGGING AND DROUGHT</scope>
    <scope>GENE FAMILY</scope>
    <scope>NOMENCLATURE</scope>
    <source>
        <strain>cv. BR-4</strain>
        <strain>cv. Embrapa 45</strain>
    </source>
</reference>
<organism>
    <name type="scientific">Glycine max</name>
    <name type="common">Soybean</name>
    <name type="synonym">Glycine hispida</name>
    <dbReference type="NCBI Taxonomy" id="3847"/>
    <lineage>
        <taxon>Eukaryota</taxon>
        <taxon>Viridiplantae</taxon>
        <taxon>Streptophyta</taxon>
        <taxon>Embryophyta</taxon>
        <taxon>Tracheophyta</taxon>
        <taxon>Spermatophyta</taxon>
        <taxon>Magnoliopsida</taxon>
        <taxon>eudicotyledons</taxon>
        <taxon>Gunneridae</taxon>
        <taxon>Pentapetalae</taxon>
        <taxon>rosids</taxon>
        <taxon>fabids</taxon>
        <taxon>Fabales</taxon>
        <taxon>Fabaceae</taxon>
        <taxon>Papilionoideae</taxon>
        <taxon>50 kb inversion clade</taxon>
        <taxon>NPAAA clade</taxon>
        <taxon>indigoferoid/millettioid clade</taxon>
        <taxon>Phaseoleae</taxon>
        <taxon>Glycine</taxon>
        <taxon>Glycine subgen. Soja</taxon>
    </lineage>
</organism>
<feature type="initiator methionine" description="Removed" evidence="1">
    <location>
        <position position="1"/>
    </location>
</feature>
<feature type="chain" id="PRO_0000460293" description="Leghemoglobin 5">
    <location>
        <begin position="2"/>
        <end position="168"/>
    </location>
</feature>
<feature type="domain" description="Globin" evidence="7">
    <location>
        <begin position="3"/>
        <end position="163"/>
    </location>
</feature>
<feature type="binding site" evidence="4">
    <location>
        <position position="63"/>
    </location>
    <ligand>
        <name>heme b</name>
        <dbReference type="ChEBI" id="CHEBI:60344"/>
    </ligand>
</feature>
<feature type="binding site" evidence="4">
    <location>
        <position position="79"/>
    </location>
    <ligand>
        <name>O2</name>
        <dbReference type="ChEBI" id="CHEBI:15379"/>
    </ligand>
</feature>
<feature type="binding site" evidence="4">
    <location>
        <position position="82"/>
    </location>
    <ligand>
        <name>heme b</name>
        <dbReference type="ChEBI" id="CHEBI:60344"/>
    </ligand>
</feature>
<feature type="binding site" description="proximal binding residue" evidence="7">
    <location>
        <position position="110"/>
    </location>
    <ligand>
        <name>heme b</name>
        <dbReference type="ChEBI" id="CHEBI:60344"/>
    </ligand>
    <ligandPart>
        <name>Fe</name>
        <dbReference type="ChEBI" id="CHEBI:18248"/>
    </ligandPart>
</feature>
<feature type="binding site" evidence="4">
    <location>
        <position position="113"/>
    </location>
    <ligand>
        <name>heme b</name>
        <dbReference type="ChEBI" id="CHEBI:60344"/>
    </ligand>
</feature>
<feature type="modified residue" description="Phosphoserine" evidence="5">
    <location>
        <position position="63"/>
    </location>
</feature>
<feature type="modified residue" description="Nitrated tyrosine" evidence="2">
    <location>
        <position position="151"/>
    </location>
</feature>
<proteinExistence type="evidence at transcript level"/>
<name>LGB5_SOYBN</name>
<keyword id="KW-0963">Cytoplasm</keyword>
<keyword id="KW-0349">Heme</keyword>
<keyword id="KW-0408">Iron</keyword>
<keyword id="KW-0479">Metal-binding</keyword>
<keyword id="KW-0944">Nitration</keyword>
<keyword id="KW-0535">Nitrogen fixation</keyword>
<keyword id="KW-0539">Nucleus</keyword>
<keyword id="KW-0561">Oxygen transport</keyword>
<keyword id="KW-0597">Phosphoprotein</keyword>
<keyword id="KW-1185">Reference proteome</keyword>
<keyword id="KW-0813">Transport</keyword>
<dbReference type="EMBL" id="CM000843">
    <property type="protein sequence ID" value="KRH34685.1"/>
    <property type="molecule type" value="Genomic_DNA"/>
</dbReference>
<dbReference type="EMBL" id="J01304">
    <property type="protein sequence ID" value="AAA33982.1"/>
    <property type="molecule type" value="Genomic_DNA"/>
</dbReference>
<dbReference type="SMR" id="A0A0R0HW51"/>
<dbReference type="STRING" id="3847.A0A0R0HW51"/>
<dbReference type="EnsemblPlants" id="KRH34685">
    <property type="protein sequence ID" value="KRH34685"/>
    <property type="gene ID" value="GLYMA_10G198900"/>
</dbReference>
<dbReference type="Gramene" id="KRH34685">
    <property type="protein sequence ID" value="KRH34685"/>
    <property type="gene ID" value="GLYMA_10G198900"/>
</dbReference>
<dbReference type="InParanoid" id="A0A0R0HW51"/>
<dbReference type="OMA" id="KWSEEMA"/>
<dbReference type="Proteomes" id="UP000008827">
    <property type="component" value="Chromosome 10"/>
</dbReference>
<dbReference type="ExpressionAtlas" id="A0A0R0HW51">
    <property type="expression patterns" value="baseline"/>
</dbReference>
<dbReference type="GO" id="GO:0005829">
    <property type="term" value="C:cytosol"/>
    <property type="evidence" value="ECO:0007669"/>
    <property type="project" value="UniProtKB-SubCell"/>
</dbReference>
<dbReference type="GO" id="GO:0005634">
    <property type="term" value="C:nucleus"/>
    <property type="evidence" value="ECO:0007669"/>
    <property type="project" value="UniProtKB-SubCell"/>
</dbReference>
<dbReference type="GO" id="GO:0020037">
    <property type="term" value="F:heme binding"/>
    <property type="evidence" value="ECO:0007669"/>
    <property type="project" value="InterPro"/>
</dbReference>
<dbReference type="GO" id="GO:0046872">
    <property type="term" value="F:metal ion binding"/>
    <property type="evidence" value="ECO:0007669"/>
    <property type="project" value="UniProtKB-KW"/>
</dbReference>
<dbReference type="GO" id="GO:0019825">
    <property type="term" value="F:oxygen binding"/>
    <property type="evidence" value="ECO:0007669"/>
    <property type="project" value="InterPro"/>
</dbReference>
<dbReference type="GO" id="GO:0005344">
    <property type="term" value="F:oxygen carrier activity"/>
    <property type="evidence" value="ECO:0007669"/>
    <property type="project" value="UniProtKB-KW"/>
</dbReference>
<dbReference type="GO" id="GO:0009413">
    <property type="term" value="P:response to flooding"/>
    <property type="evidence" value="ECO:0000314"/>
    <property type="project" value="UniProtKB"/>
</dbReference>
<dbReference type="GO" id="GO:0009414">
    <property type="term" value="P:response to water deprivation"/>
    <property type="evidence" value="ECO:0000270"/>
    <property type="project" value="UniProtKB"/>
</dbReference>
<dbReference type="Gene3D" id="1.10.490.10">
    <property type="entry name" value="Globins"/>
    <property type="match status" value="1"/>
</dbReference>
<dbReference type="InterPro" id="IPR000971">
    <property type="entry name" value="Globin"/>
</dbReference>
<dbReference type="InterPro" id="IPR009050">
    <property type="entry name" value="Globin-like_sf"/>
</dbReference>
<dbReference type="InterPro" id="IPR012292">
    <property type="entry name" value="Globin/Proto"/>
</dbReference>
<dbReference type="InterPro" id="IPR001032">
    <property type="entry name" value="Leghaemoglobin-like"/>
</dbReference>
<dbReference type="InterPro" id="IPR019824">
    <property type="entry name" value="Leghaemoglobin_Fe_BS"/>
</dbReference>
<dbReference type="PANTHER" id="PTHR22924">
    <property type="entry name" value="LEGHEMOGLOBIN-RELATED"/>
    <property type="match status" value="1"/>
</dbReference>
<dbReference type="PANTHER" id="PTHR22924:SF92">
    <property type="entry name" value="NON-SYMBIOTIC HEMOGLOBIN 2"/>
    <property type="match status" value="1"/>
</dbReference>
<dbReference type="Pfam" id="PF00042">
    <property type="entry name" value="Globin"/>
    <property type="match status" value="1"/>
</dbReference>
<dbReference type="SUPFAM" id="SSF46458">
    <property type="entry name" value="Globin-like"/>
    <property type="match status" value="1"/>
</dbReference>
<dbReference type="PROSITE" id="PS01033">
    <property type="entry name" value="GLOBIN"/>
    <property type="match status" value="1"/>
</dbReference>
<dbReference type="PROSITE" id="PS00208">
    <property type="entry name" value="PLANT_GLOBIN"/>
    <property type="match status" value="1"/>
</dbReference>
<evidence type="ECO:0000250" key="1">
    <source>
        <dbReference type="UniProtKB" id="P02232"/>
    </source>
</evidence>
<evidence type="ECO:0000250" key="2">
    <source>
        <dbReference type="UniProtKB" id="P02234"/>
    </source>
</evidence>
<evidence type="ECO:0000250" key="3">
    <source>
        <dbReference type="UniProtKB" id="P02236"/>
    </source>
</evidence>
<evidence type="ECO:0000250" key="4">
    <source>
        <dbReference type="UniProtKB" id="P02240"/>
    </source>
</evidence>
<evidence type="ECO:0000250" key="5">
    <source>
        <dbReference type="UniProtKB" id="Q3C1F7"/>
    </source>
</evidence>
<evidence type="ECO:0000250" key="6">
    <source>
        <dbReference type="UniProtKB" id="Q43296"/>
    </source>
</evidence>
<evidence type="ECO:0000255" key="7">
    <source>
        <dbReference type="PROSITE-ProRule" id="PRU00238"/>
    </source>
</evidence>
<evidence type="ECO:0000269" key="8">
    <source>
    </source>
</evidence>
<evidence type="ECO:0000269" key="9">
    <source>
    </source>
</evidence>
<evidence type="ECO:0000303" key="10">
    <source>
    </source>
</evidence>
<evidence type="ECO:0000303" key="11">
    <source>
    </source>
</evidence>
<evidence type="ECO:0000305" key="12"/>
<evidence type="ECO:0000312" key="13">
    <source>
        <dbReference type="EMBL" id="KRH34685.1"/>
    </source>
</evidence>
<sequence length="168" mass="18119">MGAFTEKQEALVNSSFEAFKANLPHHSVVFFNSGSVHNSVFGLIKKQNNRILEKAPAAKNMFSFLGDAVDPKNPKLAGHAEKLFGLVRDSAVQLQTKGLVVADATLGPIHTQKGVTDLQFAVVKEALLKTIKEAVGDKWSEELSNAWEVAYDEIAAAIKKAMAIGSLV</sequence>
<gene>
    <name evidence="10" type="primary">LB5</name>
    <name evidence="11" type="synonym">GLB2-2</name>
    <name evidence="13" type="ordered locus">Glyma_10G198900</name>
</gene>
<protein>
    <recommendedName>
        <fullName evidence="10">Leghemoglobin 5</fullName>
        <shortName evidence="10">GmLb5</shortName>
    </recommendedName>
    <alternativeName>
        <fullName evidence="11">Hemoglobin 2-2</fullName>
        <shortName evidence="11">GmGLB2-2</shortName>
    </alternativeName>
</protein>
<comment type="function">
    <text evidence="3 6 9">Leghemoglobin that reversibly binds oxygen O(2) through a pentacoordinated heme iron (By similarity). In root nodules, facilitates the diffusion of oxygen to the bacteroids while preventing the bacterial nitrogenase from being inactivated by buffering dioxygen, nitric oxide and carbon monoxide, and promoting the formation of reactive oxygen species (ROS, e.g. H(2)O(2)) (By similarity). This role is essential for symbiotic nitrogen fixation (SNF) (By similarity). Maybe involved in water stress tolerance (PubMed:34737003).</text>
</comment>
<comment type="subunit">
    <text evidence="4">Monomer.</text>
</comment>
<comment type="subcellular location">
    <subcellularLocation>
        <location evidence="4">Cytoplasm</location>
        <location evidence="4">Cytosol</location>
    </subcellularLocation>
    <subcellularLocation>
        <location evidence="4">Nucleus</location>
    </subcellularLocation>
</comment>
<comment type="tissue specificity">
    <text evidence="8">Expressed in root nodules and flowers.</text>
</comment>
<comment type="induction">
    <text evidence="9">Down-regulated in roots upon waterlogging and in response to drought in cv. Embrapa 45, but not in cv. BR-4.</text>
</comment>
<comment type="PTM">
    <text evidence="2">Nitrated in effective nodules and particularly in hypoxic conditions; this mechanism may play a protective role in the symbiosis by buffering toxic peroxynitrite NO(2)(-). Nitration level decrease during nodule senescence.</text>
</comment>
<comment type="PTM">
    <text evidence="5">Phosphorylation at Ser-63 disrupts the molecular environment of its porphyrin ring oxygen binding pocket, thus leading to a reduced oxygen consumption and to the delivery of oxygen O(2) to symbiosomes.</text>
</comment>
<comment type="similarity">
    <text evidence="12">Belongs to the plant globin family.</text>
</comment>
<comment type="caution">
    <text evidence="11">Maybe the product of a pseudogene.</text>
</comment>